<evidence type="ECO:0000255" key="1">
    <source>
        <dbReference type="HAMAP-Rule" id="MF_01852"/>
    </source>
</evidence>
<feature type="chain" id="PRO_0000352923" description="Threonylcarbamoyl-AMP synthase">
    <location>
        <begin position="1"/>
        <end position="183"/>
    </location>
</feature>
<feature type="domain" description="YrdC-like" evidence="1">
    <location>
        <begin position="1"/>
        <end position="183"/>
    </location>
</feature>
<comment type="function">
    <text evidence="1">Required for the formation of a threonylcarbamoyl group on adenosine at position 37 (t(6)A37) in tRNAs that read codons beginning with adenine. Catalyzes the conversion of L-threonine, HCO(3)(-)/CO(2) and ATP to give threonylcarbamoyl-AMP (TC-AMP) as the acyladenylate intermediate, with the release of diphosphate.</text>
</comment>
<comment type="catalytic activity">
    <reaction evidence="1">
        <text>L-threonine + hydrogencarbonate + ATP = L-threonylcarbamoyladenylate + diphosphate + H2O</text>
        <dbReference type="Rhea" id="RHEA:36407"/>
        <dbReference type="ChEBI" id="CHEBI:15377"/>
        <dbReference type="ChEBI" id="CHEBI:17544"/>
        <dbReference type="ChEBI" id="CHEBI:30616"/>
        <dbReference type="ChEBI" id="CHEBI:33019"/>
        <dbReference type="ChEBI" id="CHEBI:57926"/>
        <dbReference type="ChEBI" id="CHEBI:73682"/>
        <dbReference type="EC" id="2.7.7.87"/>
    </reaction>
</comment>
<comment type="subcellular location">
    <subcellularLocation>
        <location evidence="1">Cytoplasm</location>
    </subcellularLocation>
</comment>
<comment type="similarity">
    <text evidence="1">Belongs to the SUA5 family. TsaC subfamily.</text>
</comment>
<organism>
    <name type="scientific">Haemophilus influenzae (strain 86-028NP)</name>
    <dbReference type="NCBI Taxonomy" id="281310"/>
    <lineage>
        <taxon>Bacteria</taxon>
        <taxon>Pseudomonadati</taxon>
        <taxon>Pseudomonadota</taxon>
        <taxon>Gammaproteobacteria</taxon>
        <taxon>Pasteurellales</taxon>
        <taxon>Pasteurellaceae</taxon>
        <taxon>Haemophilus</taxon>
    </lineage>
</organism>
<protein>
    <recommendedName>
        <fullName evidence="1">Threonylcarbamoyl-AMP synthase</fullName>
        <shortName evidence="1">TC-AMP synthase</shortName>
        <ecNumber evidence="1">2.7.7.87</ecNumber>
    </recommendedName>
    <alternativeName>
        <fullName evidence="1">L-threonylcarbamoyladenylate synthase</fullName>
    </alternativeName>
    <alternativeName>
        <fullName evidence="1">t(6)A37 threonylcarbamoyladenosine biosynthesis protein TsaC</fullName>
    </alternativeName>
    <alternativeName>
        <fullName evidence="1">tRNA threonylcarbamoyladenosine biosynthesis protein TsaC</fullName>
    </alternativeName>
</protein>
<keyword id="KW-0067">ATP-binding</keyword>
<keyword id="KW-0963">Cytoplasm</keyword>
<keyword id="KW-0547">Nucleotide-binding</keyword>
<keyword id="KW-0548">Nucleotidyltransferase</keyword>
<keyword id="KW-0808">Transferase</keyword>
<keyword id="KW-0819">tRNA processing</keyword>
<gene>
    <name evidence="1" type="primary">tsaC</name>
    <name type="synonym">rimN</name>
    <name type="ordered locus">NTHI0777</name>
</gene>
<sequence length="183" mass="20417">MNREQIAEALRQNQVVAYPTEAVFGLGCNPQSESAVKKLLDLKQRPVEKGLILVAPSLDFFRPFVDFEQINDEQLSHLQGKYERPTTWIVPAKSTTSHFLTGKFDSIAIRLCDHPSVKALCELTGFALTSTSANLTGEPPCRTADEVRLQFGADFPVLDEIVGDARNPSEIRDLRTNQLFRQG</sequence>
<reference key="1">
    <citation type="journal article" date="2005" name="J. Bacteriol.">
        <title>Genomic sequence of an otitis media isolate of nontypeable Haemophilus influenzae: comparative study with H. influenzae serotype d, strain KW20.</title>
        <authorList>
            <person name="Harrison A."/>
            <person name="Dyer D.W."/>
            <person name="Gillaspy A."/>
            <person name="Ray W.C."/>
            <person name="Mungur R."/>
            <person name="Carson M.B."/>
            <person name="Zhong H."/>
            <person name="Gipson J."/>
            <person name="Gipson M."/>
            <person name="Johnson L.S."/>
            <person name="Lewis L."/>
            <person name="Bakaletz L.O."/>
            <person name="Munson R.S. Jr."/>
        </authorList>
    </citation>
    <scope>NUCLEOTIDE SEQUENCE [LARGE SCALE GENOMIC DNA]</scope>
    <source>
        <strain>86-028NP</strain>
    </source>
</reference>
<accession>Q4QMR0</accession>
<proteinExistence type="inferred from homology"/>
<dbReference type="EC" id="2.7.7.87" evidence="1"/>
<dbReference type="EMBL" id="CP000057">
    <property type="protein sequence ID" value="AAX87687.1"/>
    <property type="molecule type" value="Genomic_DNA"/>
</dbReference>
<dbReference type="RefSeq" id="WP_011272151.1">
    <property type="nucleotide sequence ID" value="NC_007146.2"/>
</dbReference>
<dbReference type="SMR" id="Q4QMR0"/>
<dbReference type="GeneID" id="93219657"/>
<dbReference type="KEGG" id="hit:NTHI0777"/>
<dbReference type="HOGENOM" id="CLU_031397_6_0_6"/>
<dbReference type="Proteomes" id="UP000002525">
    <property type="component" value="Chromosome"/>
</dbReference>
<dbReference type="GO" id="GO:0005737">
    <property type="term" value="C:cytoplasm"/>
    <property type="evidence" value="ECO:0007669"/>
    <property type="project" value="UniProtKB-SubCell"/>
</dbReference>
<dbReference type="GO" id="GO:0005524">
    <property type="term" value="F:ATP binding"/>
    <property type="evidence" value="ECO:0007669"/>
    <property type="project" value="UniProtKB-UniRule"/>
</dbReference>
<dbReference type="GO" id="GO:0003725">
    <property type="term" value="F:double-stranded RNA binding"/>
    <property type="evidence" value="ECO:0007669"/>
    <property type="project" value="InterPro"/>
</dbReference>
<dbReference type="GO" id="GO:0061710">
    <property type="term" value="F:L-threonylcarbamoyladenylate synthase"/>
    <property type="evidence" value="ECO:0007669"/>
    <property type="project" value="UniProtKB-EC"/>
</dbReference>
<dbReference type="GO" id="GO:0000049">
    <property type="term" value="F:tRNA binding"/>
    <property type="evidence" value="ECO:0007669"/>
    <property type="project" value="TreeGrafter"/>
</dbReference>
<dbReference type="GO" id="GO:0006450">
    <property type="term" value="P:regulation of translational fidelity"/>
    <property type="evidence" value="ECO:0007669"/>
    <property type="project" value="TreeGrafter"/>
</dbReference>
<dbReference type="GO" id="GO:0002949">
    <property type="term" value="P:tRNA threonylcarbamoyladenosine modification"/>
    <property type="evidence" value="ECO:0007669"/>
    <property type="project" value="UniProtKB-UniRule"/>
</dbReference>
<dbReference type="FunFam" id="3.90.870.10:FF:000004">
    <property type="entry name" value="Threonylcarbamoyl-AMP synthase"/>
    <property type="match status" value="1"/>
</dbReference>
<dbReference type="Gene3D" id="3.90.870.10">
    <property type="entry name" value="DHBP synthase"/>
    <property type="match status" value="1"/>
</dbReference>
<dbReference type="HAMAP" id="MF_01852">
    <property type="entry name" value="TsaC"/>
    <property type="match status" value="1"/>
</dbReference>
<dbReference type="InterPro" id="IPR017945">
    <property type="entry name" value="DHBP_synth_RibB-like_a/b_dom"/>
</dbReference>
<dbReference type="InterPro" id="IPR006070">
    <property type="entry name" value="Sua5-like_dom"/>
</dbReference>
<dbReference type="InterPro" id="IPR023535">
    <property type="entry name" value="TC-AMP_synthase"/>
</dbReference>
<dbReference type="InterPro" id="IPR050156">
    <property type="entry name" value="TC-AMP_synthase_SUA5"/>
</dbReference>
<dbReference type="PANTHER" id="PTHR17490">
    <property type="entry name" value="SUA5"/>
    <property type="match status" value="1"/>
</dbReference>
<dbReference type="PANTHER" id="PTHR17490:SF18">
    <property type="entry name" value="THREONYLCARBAMOYL-AMP SYNTHASE"/>
    <property type="match status" value="1"/>
</dbReference>
<dbReference type="Pfam" id="PF01300">
    <property type="entry name" value="Sua5_yciO_yrdC"/>
    <property type="match status" value="1"/>
</dbReference>
<dbReference type="SUPFAM" id="SSF55821">
    <property type="entry name" value="YrdC/RibB"/>
    <property type="match status" value="1"/>
</dbReference>
<dbReference type="PROSITE" id="PS51163">
    <property type="entry name" value="YRDC"/>
    <property type="match status" value="1"/>
</dbReference>
<name>TSAC_HAEI8</name>